<accession>P43727</accession>
<name>TPIS_HAEIN</name>
<reference key="1">
    <citation type="journal article" date="1995" name="Science">
        <title>Whole-genome random sequencing and assembly of Haemophilus influenzae Rd.</title>
        <authorList>
            <person name="Fleischmann R.D."/>
            <person name="Adams M.D."/>
            <person name="White O."/>
            <person name="Clayton R.A."/>
            <person name="Kirkness E.F."/>
            <person name="Kerlavage A.R."/>
            <person name="Bult C.J."/>
            <person name="Tomb J.-F."/>
            <person name="Dougherty B.A."/>
            <person name="Merrick J.M."/>
            <person name="McKenney K."/>
            <person name="Sutton G.G."/>
            <person name="FitzHugh W."/>
            <person name="Fields C.A."/>
            <person name="Gocayne J.D."/>
            <person name="Scott J.D."/>
            <person name="Shirley R."/>
            <person name="Liu L.-I."/>
            <person name="Glodek A."/>
            <person name="Kelley J.M."/>
            <person name="Weidman J.F."/>
            <person name="Phillips C.A."/>
            <person name="Spriggs T."/>
            <person name="Hedblom E."/>
            <person name="Cotton M.D."/>
            <person name="Utterback T.R."/>
            <person name="Hanna M.C."/>
            <person name="Nguyen D.T."/>
            <person name="Saudek D.M."/>
            <person name="Brandon R.C."/>
            <person name="Fine L.D."/>
            <person name="Fritchman J.L."/>
            <person name="Fuhrmann J.L."/>
            <person name="Geoghagen N.S.M."/>
            <person name="Gnehm C.L."/>
            <person name="McDonald L.A."/>
            <person name="Small K.V."/>
            <person name="Fraser C.M."/>
            <person name="Smith H.O."/>
            <person name="Venter J.C."/>
        </authorList>
    </citation>
    <scope>NUCLEOTIDE SEQUENCE [LARGE SCALE GENOMIC DNA]</scope>
    <source>
        <strain>ATCC 51907 / DSM 11121 / KW20 / Rd</strain>
    </source>
</reference>
<reference key="2">
    <citation type="journal article" date="2000" name="Electrophoresis">
        <title>Two-dimensional map of the proteome of Haemophilus influenzae.</title>
        <authorList>
            <person name="Langen H."/>
            <person name="Takacs B."/>
            <person name="Evers S."/>
            <person name="Berndt P."/>
            <person name="Lahm H.W."/>
            <person name="Wipf B."/>
            <person name="Gray C."/>
            <person name="Fountoulakis M."/>
        </authorList>
    </citation>
    <scope>PROTEIN SEQUENCE OF 219-223</scope>
    <source>
        <strain>ATCC 51907 / DSM 11121 / KW20 / Rd</strain>
    </source>
</reference>
<sequence length="263" mass="27287">MARRPLVMGNWKLNGSKAFTKELIEGLKAELHDVTGCDVAIAPPVMYLGTAEAALSGCGCSCGGKSVIQLGAQNVDINVKGAFTGDISTEMLKDFGAKYIIIGHSERRTYHKESDEFVAKKFGALKEAGLVPVLCIGESEAENEAGKTEEVCARQIDAVINALGVEAFNGAVIAYEPIWAIGTGKSATPAQAQAVHAFIRGHIAAKSQAVAEQVIIQYGGSVNDANAAELFTQPDIDGALVGGASLKAPAFAVIVKAAAAAKN</sequence>
<feature type="chain" id="PRO_0000090226" description="Triosephosphate isomerase">
    <location>
        <begin position="1"/>
        <end position="263"/>
    </location>
</feature>
<feature type="active site" description="Electrophile" evidence="1">
    <location>
        <position position="104"/>
    </location>
</feature>
<feature type="active site" description="Proton acceptor" evidence="1">
    <location>
        <position position="176"/>
    </location>
</feature>
<feature type="binding site" evidence="1">
    <location>
        <begin position="10"/>
        <end position="12"/>
    </location>
    <ligand>
        <name>substrate</name>
    </ligand>
</feature>
<feature type="binding site" evidence="1">
    <location>
        <position position="182"/>
    </location>
    <ligand>
        <name>substrate</name>
    </ligand>
</feature>
<feature type="binding site" evidence="1">
    <location>
        <position position="221"/>
    </location>
    <ligand>
        <name>substrate</name>
    </ligand>
</feature>
<feature type="binding site" evidence="1">
    <location>
        <begin position="242"/>
        <end position="243"/>
    </location>
    <ligand>
        <name>substrate</name>
    </ligand>
</feature>
<gene>
    <name evidence="1" type="primary">tpiA</name>
    <name type="synonym">tpi</name>
    <name type="ordered locus">HI_0678</name>
</gene>
<keyword id="KW-0963">Cytoplasm</keyword>
<keyword id="KW-0903">Direct protein sequencing</keyword>
<keyword id="KW-0312">Gluconeogenesis</keyword>
<keyword id="KW-0324">Glycolysis</keyword>
<keyword id="KW-0413">Isomerase</keyword>
<keyword id="KW-1185">Reference proteome</keyword>
<comment type="function">
    <text evidence="1">Involved in the gluconeogenesis. Catalyzes stereospecifically the conversion of dihydroxyacetone phosphate (DHAP) to D-glyceraldehyde-3-phosphate (G3P).</text>
</comment>
<comment type="catalytic activity">
    <reaction evidence="1">
        <text>D-glyceraldehyde 3-phosphate = dihydroxyacetone phosphate</text>
        <dbReference type="Rhea" id="RHEA:18585"/>
        <dbReference type="ChEBI" id="CHEBI:57642"/>
        <dbReference type="ChEBI" id="CHEBI:59776"/>
        <dbReference type="EC" id="5.3.1.1"/>
    </reaction>
</comment>
<comment type="pathway">
    <text evidence="1">Carbohydrate biosynthesis; gluconeogenesis.</text>
</comment>
<comment type="pathway">
    <text evidence="1">Carbohydrate degradation; glycolysis; D-glyceraldehyde 3-phosphate from glycerone phosphate: step 1/1.</text>
</comment>
<comment type="subunit">
    <text evidence="1">Homodimer.</text>
</comment>
<comment type="subcellular location">
    <subcellularLocation>
        <location evidence="1">Cytoplasm</location>
    </subcellularLocation>
</comment>
<comment type="similarity">
    <text evidence="1">Belongs to the triosephosphate isomerase family.</text>
</comment>
<protein>
    <recommendedName>
        <fullName evidence="1">Triosephosphate isomerase</fullName>
        <shortName evidence="1">TIM</shortName>
        <shortName evidence="1">TPI</shortName>
        <ecNumber evidence="1">5.3.1.1</ecNumber>
    </recommendedName>
    <alternativeName>
        <fullName evidence="1">Triose-phosphate isomerase</fullName>
    </alternativeName>
</protein>
<evidence type="ECO:0000255" key="1">
    <source>
        <dbReference type="HAMAP-Rule" id="MF_00147"/>
    </source>
</evidence>
<organism>
    <name type="scientific">Haemophilus influenzae (strain ATCC 51907 / DSM 11121 / KW20 / Rd)</name>
    <dbReference type="NCBI Taxonomy" id="71421"/>
    <lineage>
        <taxon>Bacteria</taxon>
        <taxon>Pseudomonadati</taxon>
        <taxon>Pseudomonadota</taxon>
        <taxon>Gammaproteobacteria</taxon>
        <taxon>Pasteurellales</taxon>
        <taxon>Pasteurellaceae</taxon>
        <taxon>Haemophilus</taxon>
    </lineage>
</organism>
<dbReference type="EC" id="5.3.1.1" evidence="1"/>
<dbReference type="EMBL" id="L42023">
    <property type="protein sequence ID" value="AAC22337.1"/>
    <property type="molecule type" value="Genomic_DNA"/>
</dbReference>
<dbReference type="PIR" id="G64085">
    <property type="entry name" value="G64085"/>
</dbReference>
<dbReference type="RefSeq" id="NP_438838.1">
    <property type="nucleotide sequence ID" value="NC_000907.1"/>
</dbReference>
<dbReference type="SMR" id="P43727"/>
<dbReference type="STRING" id="71421.HI_0678"/>
<dbReference type="EnsemblBacteria" id="AAC22337">
    <property type="protein sequence ID" value="AAC22337"/>
    <property type="gene ID" value="HI_0678"/>
</dbReference>
<dbReference type="KEGG" id="hin:HI_0678"/>
<dbReference type="PATRIC" id="fig|71421.8.peg.708"/>
<dbReference type="eggNOG" id="COG0149">
    <property type="taxonomic scope" value="Bacteria"/>
</dbReference>
<dbReference type="HOGENOM" id="CLU_024251_2_1_6"/>
<dbReference type="OrthoDB" id="9809429at2"/>
<dbReference type="PhylomeDB" id="P43727"/>
<dbReference type="BioCyc" id="HINF71421:G1GJ1-713-MONOMER"/>
<dbReference type="UniPathway" id="UPA00109">
    <property type="reaction ID" value="UER00189"/>
</dbReference>
<dbReference type="UniPathway" id="UPA00138"/>
<dbReference type="Proteomes" id="UP000000579">
    <property type="component" value="Chromosome"/>
</dbReference>
<dbReference type="GO" id="GO:0005829">
    <property type="term" value="C:cytosol"/>
    <property type="evidence" value="ECO:0000318"/>
    <property type="project" value="GO_Central"/>
</dbReference>
<dbReference type="GO" id="GO:0004807">
    <property type="term" value="F:triose-phosphate isomerase activity"/>
    <property type="evidence" value="ECO:0000318"/>
    <property type="project" value="GO_Central"/>
</dbReference>
<dbReference type="GO" id="GO:0006094">
    <property type="term" value="P:gluconeogenesis"/>
    <property type="evidence" value="ECO:0000318"/>
    <property type="project" value="GO_Central"/>
</dbReference>
<dbReference type="GO" id="GO:0046166">
    <property type="term" value="P:glyceraldehyde-3-phosphate biosynthetic process"/>
    <property type="evidence" value="ECO:0000318"/>
    <property type="project" value="GO_Central"/>
</dbReference>
<dbReference type="GO" id="GO:0019563">
    <property type="term" value="P:glycerol catabolic process"/>
    <property type="evidence" value="ECO:0000318"/>
    <property type="project" value="GO_Central"/>
</dbReference>
<dbReference type="GO" id="GO:0006096">
    <property type="term" value="P:glycolytic process"/>
    <property type="evidence" value="ECO:0000318"/>
    <property type="project" value="GO_Central"/>
</dbReference>
<dbReference type="CDD" id="cd00311">
    <property type="entry name" value="TIM"/>
    <property type="match status" value="1"/>
</dbReference>
<dbReference type="FunFam" id="3.20.20.70:FF:000020">
    <property type="entry name" value="Triosephosphate isomerase"/>
    <property type="match status" value="1"/>
</dbReference>
<dbReference type="Gene3D" id="3.20.20.70">
    <property type="entry name" value="Aldolase class I"/>
    <property type="match status" value="1"/>
</dbReference>
<dbReference type="HAMAP" id="MF_00147_B">
    <property type="entry name" value="TIM_B"/>
    <property type="match status" value="1"/>
</dbReference>
<dbReference type="InterPro" id="IPR013785">
    <property type="entry name" value="Aldolase_TIM"/>
</dbReference>
<dbReference type="InterPro" id="IPR035990">
    <property type="entry name" value="TIM_sf"/>
</dbReference>
<dbReference type="InterPro" id="IPR022896">
    <property type="entry name" value="TrioseP_Isoase_bac/euk"/>
</dbReference>
<dbReference type="InterPro" id="IPR000652">
    <property type="entry name" value="Triosephosphate_isomerase"/>
</dbReference>
<dbReference type="InterPro" id="IPR020861">
    <property type="entry name" value="Triosephosphate_isomerase_AS"/>
</dbReference>
<dbReference type="NCBIfam" id="TIGR00419">
    <property type="entry name" value="tim"/>
    <property type="match status" value="1"/>
</dbReference>
<dbReference type="PANTHER" id="PTHR21139">
    <property type="entry name" value="TRIOSEPHOSPHATE ISOMERASE"/>
    <property type="match status" value="1"/>
</dbReference>
<dbReference type="PANTHER" id="PTHR21139:SF42">
    <property type="entry name" value="TRIOSEPHOSPHATE ISOMERASE"/>
    <property type="match status" value="1"/>
</dbReference>
<dbReference type="Pfam" id="PF00121">
    <property type="entry name" value="TIM"/>
    <property type="match status" value="1"/>
</dbReference>
<dbReference type="SUPFAM" id="SSF51351">
    <property type="entry name" value="Triosephosphate isomerase (TIM)"/>
    <property type="match status" value="1"/>
</dbReference>
<dbReference type="PROSITE" id="PS00171">
    <property type="entry name" value="TIM_1"/>
    <property type="match status" value="1"/>
</dbReference>
<dbReference type="PROSITE" id="PS51440">
    <property type="entry name" value="TIM_2"/>
    <property type="match status" value="1"/>
</dbReference>
<proteinExistence type="evidence at protein level"/>